<evidence type="ECO:0000255" key="1">
    <source>
        <dbReference type="HAMAP-Rule" id="MF_02002"/>
    </source>
</evidence>
<reference key="1">
    <citation type="journal article" date="2007" name="Proc. Natl. Acad. Sci. U.S.A.">
        <title>Genome and proteome of long-chain alkane degrading Geobacillus thermodenitrificans NG80-2 isolated from a deep-subsurface oil reservoir.</title>
        <authorList>
            <person name="Feng L."/>
            <person name="Wang W."/>
            <person name="Cheng J."/>
            <person name="Ren Y."/>
            <person name="Zhao G."/>
            <person name="Gao C."/>
            <person name="Tang Y."/>
            <person name="Liu X."/>
            <person name="Han W."/>
            <person name="Peng X."/>
            <person name="Liu R."/>
            <person name="Wang L."/>
        </authorList>
    </citation>
    <scope>NUCLEOTIDE SEQUENCE [LARGE SCALE GENOMIC DNA]</scope>
    <source>
        <strain>NG80-2</strain>
    </source>
</reference>
<gene>
    <name evidence="1" type="primary">ileS</name>
    <name type="ordered locus">GTNG_1001</name>
</gene>
<feature type="chain" id="PRO_1000022071" description="Isoleucine--tRNA ligase">
    <location>
        <begin position="1"/>
        <end position="924"/>
    </location>
</feature>
<feature type="short sequence motif" description="'HIGH' region">
    <location>
        <begin position="57"/>
        <end position="67"/>
    </location>
</feature>
<feature type="short sequence motif" description="'KMSKS' region">
    <location>
        <begin position="593"/>
        <end position="597"/>
    </location>
</feature>
<feature type="binding site" evidence="1">
    <location>
        <position position="552"/>
    </location>
    <ligand>
        <name>L-isoleucyl-5'-AMP</name>
        <dbReference type="ChEBI" id="CHEBI:178002"/>
    </ligand>
</feature>
<feature type="binding site" evidence="1">
    <location>
        <position position="596"/>
    </location>
    <ligand>
        <name>ATP</name>
        <dbReference type="ChEBI" id="CHEBI:30616"/>
    </ligand>
</feature>
<feature type="binding site" evidence="1">
    <location>
        <position position="891"/>
    </location>
    <ligand>
        <name>Zn(2+)</name>
        <dbReference type="ChEBI" id="CHEBI:29105"/>
    </ligand>
</feature>
<feature type="binding site" evidence="1">
    <location>
        <position position="894"/>
    </location>
    <ligand>
        <name>Zn(2+)</name>
        <dbReference type="ChEBI" id="CHEBI:29105"/>
    </ligand>
</feature>
<feature type="binding site" evidence="1">
    <location>
        <position position="911"/>
    </location>
    <ligand>
        <name>Zn(2+)</name>
        <dbReference type="ChEBI" id="CHEBI:29105"/>
    </ligand>
</feature>
<feature type="binding site" evidence="1">
    <location>
        <position position="914"/>
    </location>
    <ligand>
        <name>Zn(2+)</name>
        <dbReference type="ChEBI" id="CHEBI:29105"/>
    </ligand>
</feature>
<protein>
    <recommendedName>
        <fullName evidence="1">Isoleucine--tRNA ligase</fullName>
        <ecNumber evidence="1">6.1.1.5</ecNumber>
    </recommendedName>
    <alternativeName>
        <fullName evidence="1">Isoleucyl-tRNA synthetase</fullName>
        <shortName evidence="1">IleRS</shortName>
    </alternativeName>
</protein>
<organism>
    <name type="scientific">Geobacillus thermodenitrificans (strain NG80-2)</name>
    <dbReference type="NCBI Taxonomy" id="420246"/>
    <lineage>
        <taxon>Bacteria</taxon>
        <taxon>Bacillati</taxon>
        <taxon>Bacillota</taxon>
        <taxon>Bacilli</taxon>
        <taxon>Bacillales</taxon>
        <taxon>Anoxybacillaceae</taxon>
        <taxon>Geobacillus</taxon>
    </lineage>
</organism>
<keyword id="KW-0030">Aminoacyl-tRNA synthetase</keyword>
<keyword id="KW-0067">ATP-binding</keyword>
<keyword id="KW-0963">Cytoplasm</keyword>
<keyword id="KW-0436">Ligase</keyword>
<keyword id="KW-0479">Metal-binding</keyword>
<keyword id="KW-0547">Nucleotide-binding</keyword>
<keyword id="KW-0648">Protein biosynthesis</keyword>
<keyword id="KW-0862">Zinc</keyword>
<accession>A4IM25</accession>
<comment type="function">
    <text evidence="1">Catalyzes the attachment of isoleucine to tRNA(Ile). As IleRS can inadvertently accommodate and process structurally similar amino acids such as valine, to avoid such errors it has two additional distinct tRNA(Ile)-dependent editing activities. One activity is designated as 'pretransfer' editing and involves the hydrolysis of activated Val-AMP. The other activity is designated 'posttransfer' editing and involves deacylation of mischarged Val-tRNA(Ile).</text>
</comment>
<comment type="catalytic activity">
    <reaction evidence="1">
        <text>tRNA(Ile) + L-isoleucine + ATP = L-isoleucyl-tRNA(Ile) + AMP + diphosphate</text>
        <dbReference type="Rhea" id="RHEA:11060"/>
        <dbReference type="Rhea" id="RHEA-COMP:9666"/>
        <dbReference type="Rhea" id="RHEA-COMP:9695"/>
        <dbReference type="ChEBI" id="CHEBI:30616"/>
        <dbReference type="ChEBI" id="CHEBI:33019"/>
        <dbReference type="ChEBI" id="CHEBI:58045"/>
        <dbReference type="ChEBI" id="CHEBI:78442"/>
        <dbReference type="ChEBI" id="CHEBI:78528"/>
        <dbReference type="ChEBI" id="CHEBI:456215"/>
        <dbReference type="EC" id="6.1.1.5"/>
    </reaction>
</comment>
<comment type="cofactor">
    <cofactor evidence="1">
        <name>Zn(2+)</name>
        <dbReference type="ChEBI" id="CHEBI:29105"/>
    </cofactor>
    <text evidence="1">Binds 1 zinc ion per subunit.</text>
</comment>
<comment type="subunit">
    <text evidence="1">Monomer.</text>
</comment>
<comment type="subcellular location">
    <subcellularLocation>
        <location evidence="1">Cytoplasm</location>
    </subcellularLocation>
</comment>
<comment type="domain">
    <text evidence="1">IleRS has two distinct active sites: one for aminoacylation and one for editing. The misactivated valine is translocated from the active site to the editing site, which sterically excludes the correctly activated isoleucine. The single editing site contains two valyl binding pockets, one specific for each substrate (Val-AMP or Val-tRNA(Ile)).</text>
</comment>
<comment type="similarity">
    <text evidence="1">Belongs to the class-I aminoacyl-tRNA synthetase family. IleS type 1 subfamily.</text>
</comment>
<dbReference type="EC" id="6.1.1.5" evidence="1"/>
<dbReference type="EMBL" id="CP000557">
    <property type="protein sequence ID" value="ABO66379.1"/>
    <property type="molecule type" value="Genomic_DNA"/>
</dbReference>
<dbReference type="RefSeq" id="WP_011887108.1">
    <property type="nucleotide sequence ID" value="NC_009328.1"/>
</dbReference>
<dbReference type="SMR" id="A4IM25"/>
<dbReference type="KEGG" id="gtn:GTNG_1001"/>
<dbReference type="eggNOG" id="COG0060">
    <property type="taxonomic scope" value="Bacteria"/>
</dbReference>
<dbReference type="HOGENOM" id="CLU_001493_7_1_9"/>
<dbReference type="Proteomes" id="UP000001578">
    <property type="component" value="Chromosome"/>
</dbReference>
<dbReference type="GO" id="GO:0005829">
    <property type="term" value="C:cytosol"/>
    <property type="evidence" value="ECO:0007669"/>
    <property type="project" value="TreeGrafter"/>
</dbReference>
<dbReference type="GO" id="GO:0002161">
    <property type="term" value="F:aminoacyl-tRNA deacylase activity"/>
    <property type="evidence" value="ECO:0007669"/>
    <property type="project" value="InterPro"/>
</dbReference>
<dbReference type="GO" id="GO:0005524">
    <property type="term" value="F:ATP binding"/>
    <property type="evidence" value="ECO:0007669"/>
    <property type="project" value="UniProtKB-UniRule"/>
</dbReference>
<dbReference type="GO" id="GO:0004822">
    <property type="term" value="F:isoleucine-tRNA ligase activity"/>
    <property type="evidence" value="ECO:0007669"/>
    <property type="project" value="UniProtKB-UniRule"/>
</dbReference>
<dbReference type="GO" id="GO:0000049">
    <property type="term" value="F:tRNA binding"/>
    <property type="evidence" value="ECO:0007669"/>
    <property type="project" value="InterPro"/>
</dbReference>
<dbReference type="GO" id="GO:0008270">
    <property type="term" value="F:zinc ion binding"/>
    <property type="evidence" value="ECO:0007669"/>
    <property type="project" value="UniProtKB-UniRule"/>
</dbReference>
<dbReference type="GO" id="GO:0006428">
    <property type="term" value="P:isoleucyl-tRNA aminoacylation"/>
    <property type="evidence" value="ECO:0007669"/>
    <property type="project" value="UniProtKB-UniRule"/>
</dbReference>
<dbReference type="CDD" id="cd07960">
    <property type="entry name" value="Anticodon_Ia_Ile_BEm"/>
    <property type="match status" value="1"/>
</dbReference>
<dbReference type="CDD" id="cd00818">
    <property type="entry name" value="IleRS_core"/>
    <property type="match status" value="1"/>
</dbReference>
<dbReference type="FunFam" id="1.10.10.830:FF:000001">
    <property type="entry name" value="Isoleucine--tRNA ligase"/>
    <property type="match status" value="1"/>
</dbReference>
<dbReference type="FunFam" id="1.10.730.20:FF:000001">
    <property type="entry name" value="Isoleucine--tRNA ligase"/>
    <property type="match status" value="1"/>
</dbReference>
<dbReference type="FunFam" id="3.40.50.620:FF:000152">
    <property type="entry name" value="Isoleucine--tRNA ligase"/>
    <property type="match status" value="1"/>
</dbReference>
<dbReference type="Gene3D" id="1.10.730.20">
    <property type="match status" value="1"/>
</dbReference>
<dbReference type="Gene3D" id="3.40.50.620">
    <property type="entry name" value="HUPs"/>
    <property type="match status" value="2"/>
</dbReference>
<dbReference type="Gene3D" id="1.10.10.830">
    <property type="entry name" value="Ile-tRNA synthetase CP2 domain-like"/>
    <property type="match status" value="1"/>
</dbReference>
<dbReference type="HAMAP" id="MF_02002">
    <property type="entry name" value="Ile_tRNA_synth_type1"/>
    <property type="match status" value="1"/>
</dbReference>
<dbReference type="InterPro" id="IPR001412">
    <property type="entry name" value="aa-tRNA-synth_I_CS"/>
</dbReference>
<dbReference type="InterPro" id="IPR002300">
    <property type="entry name" value="aa-tRNA-synth_Ia"/>
</dbReference>
<dbReference type="InterPro" id="IPR033708">
    <property type="entry name" value="Anticodon_Ile_BEm"/>
</dbReference>
<dbReference type="InterPro" id="IPR002301">
    <property type="entry name" value="Ile-tRNA-ligase"/>
</dbReference>
<dbReference type="InterPro" id="IPR023585">
    <property type="entry name" value="Ile-tRNA-ligase_type1"/>
</dbReference>
<dbReference type="InterPro" id="IPR050081">
    <property type="entry name" value="Ile-tRNA_ligase"/>
</dbReference>
<dbReference type="InterPro" id="IPR013155">
    <property type="entry name" value="M/V/L/I-tRNA-synth_anticd-bd"/>
</dbReference>
<dbReference type="InterPro" id="IPR014729">
    <property type="entry name" value="Rossmann-like_a/b/a_fold"/>
</dbReference>
<dbReference type="InterPro" id="IPR009080">
    <property type="entry name" value="tRNAsynth_Ia_anticodon-bd"/>
</dbReference>
<dbReference type="InterPro" id="IPR009008">
    <property type="entry name" value="Val/Leu/Ile-tRNA-synth_edit"/>
</dbReference>
<dbReference type="InterPro" id="IPR010663">
    <property type="entry name" value="Znf_FPG/IleRS"/>
</dbReference>
<dbReference type="NCBIfam" id="TIGR00392">
    <property type="entry name" value="ileS"/>
    <property type="match status" value="1"/>
</dbReference>
<dbReference type="PANTHER" id="PTHR42765:SF1">
    <property type="entry name" value="ISOLEUCINE--TRNA LIGASE, MITOCHONDRIAL"/>
    <property type="match status" value="1"/>
</dbReference>
<dbReference type="PANTHER" id="PTHR42765">
    <property type="entry name" value="SOLEUCYL-TRNA SYNTHETASE"/>
    <property type="match status" value="1"/>
</dbReference>
<dbReference type="Pfam" id="PF08264">
    <property type="entry name" value="Anticodon_1"/>
    <property type="match status" value="1"/>
</dbReference>
<dbReference type="Pfam" id="PF00133">
    <property type="entry name" value="tRNA-synt_1"/>
    <property type="match status" value="1"/>
</dbReference>
<dbReference type="Pfam" id="PF06827">
    <property type="entry name" value="zf-FPG_IleRS"/>
    <property type="match status" value="1"/>
</dbReference>
<dbReference type="PRINTS" id="PR00984">
    <property type="entry name" value="TRNASYNTHILE"/>
</dbReference>
<dbReference type="SUPFAM" id="SSF47323">
    <property type="entry name" value="Anticodon-binding domain of a subclass of class I aminoacyl-tRNA synthetases"/>
    <property type="match status" value="1"/>
</dbReference>
<dbReference type="SUPFAM" id="SSF52374">
    <property type="entry name" value="Nucleotidylyl transferase"/>
    <property type="match status" value="1"/>
</dbReference>
<dbReference type="SUPFAM" id="SSF50677">
    <property type="entry name" value="ValRS/IleRS/LeuRS editing domain"/>
    <property type="match status" value="1"/>
</dbReference>
<dbReference type="PROSITE" id="PS00178">
    <property type="entry name" value="AA_TRNA_LIGASE_I"/>
    <property type="match status" value="1"/>
</dbReference>
<proteinExistence type="inferred from homology"/>
<name>SYI_GEOTN</name>
<sequence length="924" mass="104675">MDYKETLLMPQTEFPMRGNLPKREPEMQKKWEEMDIYRKVQERTKGRPLFVLHDGPPYANGDIHMGHALNKILKDIIVRYKSMSGFCAPYVPGWDTHGLPIETALTKQGVDRKSMSVAEFRKLCEQYAYEQIDNQRQQFKRLGVRGDWDNPYITLKPEYEAQQIKVFGEMAKKGLIYKGLKPVYWSPSSESALAEAEIEYKDKRSPSIYVAFPVKDGKGVLQGDERIVIWTTTPWTIPANLAIAVHPDLDYYIVEANGQKYVVAAALAESVAKEVGWEAWSVVKTVKGKELEYVVAKHPFYERDSLVVCGEHVTTDAGTGCVHTAPGHGEDDFIVGQKYGLPVLCPVDERGYMTEEAPGFAGMFYDEANKAITQKLEEVGALLKLSFITHSYPHDWRTKQPTIFRATTQWFASIDKIRDQLLDAIKETKWVPEWGEIRIHNMVRDRGDWCISRQRAWGVPIPVFYGENGEPIITDETIEHVSNLFRQYGSNVWFEREAKDLLPEGFTHPSSPNGLFTKETDIMDVWFDSGSSHQAVLVERDDLERPADLYLEGSDQYRGWFNSSLSTAVAVTGKAPYKGVLSHGFVLDGEGRKMSKSLGNVVVPAKVMEQLGADILRLWVASVDYQADVRISDNILKQVSEVYRKIRNTFRFMLGNLFDFDPNQNAVPVGELGELDRYMLAKLNKLIAKVKKAYDSYDFAAVYHEMNHFCTVELSAFYLDMAKDILYIEAADCRARRAVQTVLYETVVALAKLIAPILPHTADEVWEHIPNRKEQVESVQLTDMPEPMAIDGEEALLAKWDAFMDVRDDILKALENARNEKVIGKSLTASVTVYPKDEVRALLASINEDLRQLLIVSAFSVADESYDAAPAEAERLNHVAVIVRPAEGETCERCWTVTPDVGRDESHPTLCPRCAHIVNEHYSA</sequence>